<name>GLYA_HAEI8</name>
<evidence type="ECO:0000255" key="1">
    <source>
        <dbReference type="HAMAP-Rule" id="MF_00051"/>
    </source>
</evidence>
<organism>
    <name type="scientific">Haemophilus influenzae (strain 86-028NP)</name>
    <dbReference type="NCBI Taxonomy" id="281310"/>
    <lineage>
        <taxon>Bacteria</taxon>
        <taxon>Pseudomonadati</taxon>
        <taxon>Pseudomonadota</taxon>
        <taxon>Gammaproteobacteria</taxon>
        <taxon>Pasteurellales</taxon>
        <taxon>Pasteurellaceae</taxon>
        <taxon>Haemophilus</taxon>
    </lineage>
</organism>
<dbReference type="EC" id="2.1.2.1" evidence="1"/>
<dbReference type="EMBL" id="CP000057">
    <property type="protein sequence ID" value="AAX87928.1"/>
    <property type="molecule type" value="Genomic_DNA"/>
</dbReference>
<dbReference type="RefSeq" id="WP_011272264.1">
    <property type="nucleotide sequence ID" value="NC_007146.2"/>
</dbReference>
<dbReference type="SMR" id="Q4QM19"/>
<dbReference type="GeneID" id="93219926"/>
<dbReference type="KEGG" id="hit:NTHI1054"/>
<dbReference type="HOGENOM" id="CLU_022477_2_1_6"/>
<dbReference type="UniPathway" id="UPA00193"/>
<dbReference type="UniPathway" id="UPA00288">
    <property type="reaction ID" value="UER01023"/>
</dbReference>
<dbReference type="Proteomes" id="UP000002525">
    <property type="component" value="Chromosome"/>
</dbReference>
<dbReference type="GO" id="GO:0005829">
    <property type="term" value="C:cytosol"/>
    <property type="evidence" value="ECO:0007669"/>
    <property type="project" value="TreeGrafter"/>
</dbReference>
<dbReference type="GO" id="GO:0004372">
    <property type="term" value="F:glycine hydroxymethyltransferase activity"/>
    <property type="evidence" value="ECO:0007669"/>
    <property type="project" value="UniProtKB-UniRule"/>
</dbReference>
<dbReference type="GO" id="GO:0030170">
    <property type="term" value="F:pyridoxal phosphate binding"/>
    <property type="evidence" value="ECO:0007669"/>
    <property type="project" value="UniProtKB-UniRule"/>
</dbReference>
<dbReference type="GO" id="GO:0019264">
    <property type="term" value="P:glycine biosynthetic process from serine"/>
    <property type="evidence" value="ECO:0007669"/>
    <property type="project" value="UniProtKB-UniRule"/>
</dbReference>
<dbReference type="GO" id="GO:0035999">
    <property type="term" value="P:tetrahydrofolate interconversion"/>
    <property type="evidence" value="ECO:0007669"/>
    <property type="project" value="UniProtKB-UniRule"/>
</dbReference>
<dbReference type="CDD" id="cd00378">
    <property type="entry name" value="SHMT"/>
    <property type="match status" value="1"/>
</dbReference>
<dbReference type="FunFam" id="3.40.640.10:FF:000001">
    <property type="entry name" value="Serine hydroxymethyltransferase"/>
    <property type="match status" value="1"/>
</dbReference>
<dbReference type="FunFam" id="3.90.1150.10:FF:000003">
    <property type="entry name" value="Serine hydroxymethyltransferase"/>
    <property type="match status" value="1"/>
</dbReference>
<dbReference type="Gene3D" id="3.90.1150.10">
    <property type="entry name" value="Aspartate Aminotransferase, domain 1"/>
    <property type="match status" value="1"/>
</dbReference>
<dbReference type="Gene3D" id="3.40.640.10">
    <property type="entry name" value="Type I PLP-dependent aspartate aminotransferase-like (Major domain)"/>
    <property type="match status" value="1"/>
</dbReference>
<dbReference type="HAMAP" id="MF_00051">
    <property type="entry name" value="SHMT"/>
    <property type="match status" value="1"/>
</dbReference>
<dbReference type="InterPro" id="IPR015424">
    <property type="entry name" value="PyrdxlP-dep_Trfase"/>
</dbReference>
<dbReference type="InterPro" id="IPR015421">
    <property type="entry name" value="PyrdxlP-dep_Trfase_major"/>
</dbReference>
<dbReference type="InterPro" id="IPR015422">
    <property type="entry name" value="PyrdxlP-dep_Trfase_small"/>
</dbReference>
<dbReference type="InterPro" id="IPR001085">
    <property type="entry name" value="Ser_HO-MeTrfase"/>
</dbReference>
<dbReference type="InterPro" id="IPR049943">
    <property type="entry name" value="Ser_HO-MeTrfase-like"/>
</dbReference>
<dbReference type="InterPro" id="IPR019798">
    <property type="entry name" value="Ser_HO-MeTrfase_PLP_BS"/>
</dbReference>
<dbReference type="InterPro" id="IPR039429">
    <property type="entry name" value="SHMT-like_dom"/>
</dbReference>
<dbReference type="NCBIfam" id="NF000586">
    <property type="entry name" value="PRK00011.1"/>
    <property type="match status" value="1"/>
</dbReference>
<dbReference type="PANTHER" id="PTHR11680">
    <property type="entry name" value="SERINE HYDROXYMETHYLTRANSFERASE"/>
    <property type="match status" value="1"/>
</dbReference>
<dbReference type="PANTHER" id="PTHR11680:SF50">
    <property type="entry name" value="SERINE HYDROXYMETHYLTRANSFERASE"/>
    <property type="match status" value="1"/>
</dbReference>
<dbReference type="Pfam" id="PF00464">
    <property type="entry name" value="SHMT"/>
    <property type="match status" value="1"/>
</dbReference>
<dbReference type="PIRSF" id="PIRSF000412">
    <property type="entry name" value="SHMT"/>
    <property type="match status" value="1"/>
</dbReference>
<dbReference type="SUPFAM" id="SSF53383">
    <property type="entry name" value="PLP-dependent transferases"/>
    <property type="match status" value="1"/>
</dbReference>
<dbReference type="PROSITE" id="PS00096">
    <property type="entry name" value="SHMT"/>
    <property type="match status" value="1"/>
</dbReference>
<reference key="1">
    <citation type="journal article" date="2005" name="J. Bacteriol.">
        <title>Genomic sequence of an otitis media isolate of nontypeable Haemophilus influenzae: comparative study with H. influenzae serotype d, strain KW20.</title>
        <authorList>
            <person name="Harrison A."/>
            <person name="Dyer D.W."/>
            <person name="Gillaspy A."/>
            <person name="Ray W.C."/>
            <person name="Mungur R."/>
            <person name="Carson M.B."/>
            <person name="Zhong H."/>
            <person name="Gipson J."/>
            <person name="Gipson M."/>
            <person name="Johnson L.S."/>
            <person name="Lewis L."/>
            <person name="Bakaletz L.O."/>
            <person name="Munson R.S. Jr."/>
        </authorList>
    </citation>
    <scope>NUCLEOTIDE SEQUENCE [LARGE SCALE GENOMIC DNA]</scope>
    <source>
        <strain>86-028NP</strain>
    </source>
</reference>
<keyword id="KW-0028">Amino-acid biosynthesis</keyword>
<keyword id="KW-0963">Cytoplasm</keyword>
<keyword id="KW-0554">One-carbon metabolism</keyword>
<keyword id="KW-0663">Pyridoxal phosphate</keyword>
<keyword id="KW-0808">Transferase</keyword>
<comment type="function">
    <text evidence="1">Catalyzes the reversible interconversion of serine and glycine with tetrahydrofolate (THF) serving as the one-carbon carrier. This reaction serves as the major source of one-carbon groups required for the biosynthesis of purines, thymidylate, methionine, and other important biomolecules. Also exhibits THF-independent aldolase activity toward beta-hydroxyamino acids, producing glycine and aldehydes, via a retro-aldol mechanism.</text>
</comment>
<comment type="catalytic activity">
    <reaction evidence="1">
        <text>(6R)-5,10-methylene-5,6,7,8-tetrahydrofolate + glycine + H2O = (6S)-5,6,7,8-tetrahydrofolate + L-serine</text>
        <dbReference type="Rhea" id="RHEA:15481"/>
        <dbReference type="ChEBI" id="CHEBI:15377"/>
        <dbReference type="ChEBI" id="CHEBI:15636"/>
        <dbReference type="ChEBI" id="CHEBI:33384"/>
        <dbReference type="ChEBI" id="CHEBI:57305"/>
        <dbReference type="ChEBI" id="CHEBI:57453"/>
        <dbReference type="EC" id="2.1.2.1"/>
    </reaction>
</comment>
<comment type="cofactor">
    <cofactor evidence="1">
        <name>pyridoxal 5'-phosphate</name>
        <dbReference type="ChEBI" id="CHEBI:597326"/>
    </cofactor>
</comment>
<comment type="pathway">
    <text evidence="1">One-carbon metabolism; tetrahydrofolate interconversion.</text>
</comment>
<comment type="pathway">
    <text evidence="1">Amino-acid biosynthesis; glycine biosynthesis; glycine from L-serine: step 1/1.</text>
</comment>
<comment type="subunit">
    <text evidence="1">Homodimer.</text>
</comment>
<comment type="subcellular location">
    <subcellularLocation>
        <location evidence="1">Cytoplasm</location>
    </subcellularLocation>
</comment>
<comment type="similarity">
    <text evidence="1">Belongs to the SHMT family.</text>
</comment>
<gene>
    <name evidence="1" type="primary">glyA</name>
    <name type="ordered locus">NTHI1054</name>
</gene>
<sequence>MFTRNMTIADYDPVLWQAIQDENRRQEEHIELIASENYASPRVMEAQGSQFTNKYAEGYPGKRYYGGCEYADIVEQLAIDRAKELFGADYVNVQPHSGSQANAAVYGALINAGDTILGMDLAHGGHLTHGAKVSFSGKIYNSVLYGITADGLIDYEDVRQKALECKPKLIVAGFSAYSQVVDWAKMREIADEVGAYLFVDMAHVAGLIAAGLYLNPLPHAHVVTTTTHKTLGGPRGGLILSSCGDEEIYKKLQSSVFPANQGGPLVHIIAAKAVCFKEALEPQYKEYQANVIKNAKAMVEVFKQRGYDVVSNGTENHLFLVSFIKQGLTGKAADAALGKANITVNKNAVPNDPQKPFVTSGIRVGTPSVTRRGFNENDVRELAGWMCDVLDALGKENEEQVIAETKEKVLAICKRLPVYPK</sequence>
<proteinExistence type="inferred from homology"/>
<protein>
    <recommendedName>
        <fullName evidence="1">Serine hydroxymethyltransferase</fullName>
        <shortName evidence="1">SHMT</shortName>
        <shortName evidence="1">Serine methylase</shortName>
        <ecNumber evidence="1">2.1.2.1</ecNumber>
    </recommendedName>
</protein>
<accession>Q4QM19</accession>
<feature type="chain" id="PRO_0000113584" description="Serine hydroxymethyltransferase">
    <location>
        <begin position="1"/>
        <end position="421"/>
    </location>
</feature>
<feature type="binding site" evidence="1">
    <location>
        <position position="121"/>
    </location>
    <ligand>
        <name>(6S)-5,6,7,8-tetrahydrofolate</name>
        <dbReference type="ChEBI" id="CHEBI:57453"/>
    </ligand>
</feature>
<feature type="binding site" evidence="1">
    <location>
        <begin position="125"/>
        <end position="127"/>
    </location>
    <ligand>
        <name>(6S)-5,6,7,8-tetrahydrofolate</name>
        <dbReference type="ChEBI" id="CHEBI:57453"/>
    </ligand>
</feature>
<feature type="site" description="Plays an important role in substrate specificity" evidence="1">
    <location>
        <position position="228"/>
    </location>
</feature>
<feature type="modified residue" description="N6-(pyridoxal phosphate)lysine" evidence="1">
    <location>
        <position position="229"/>
    </location>
</feature>